<reference key="1">
    <citation type="submission" date="2008-10" db="EMBL/GenBank/DDBJ databases">
        <title>Genome sequence of Bacillus cereus B4264.</title>
        <authorList>
            <person name="Dodson R.J."/>
            <person name="Durkin A.S."/>
            <person name="Rosovitz M.J."/>
            <person name="Rasko D.A."/>
            <person name="Hoffmaster A."/>
            <person name="Ravel J."/>
            <person name="Sutton G."/>
        </authorList>
    </citation>
    <scope>NUCLEOTIDE SEQUENCE [LARGE SCALE GENOMIC DNA]</scope>
    <source>
        <strain>B4264</strain>
    </source>
</reference>
<sequence>MNSKLFSPYTIKNVTLKNRIVMSPMCMYSSGNEDGSVTNFHLIHYGTRAAGQVGLVMVEATAVLAEGRISNKDLGIWDDNLIEGLHKTTTFIHDNGAKAAIQLAHAGRKAELDTNAFAPSAIPFNDKMKIPVEMNIQQIKETILAFQRAALRSKQAGFDVIELHGAHGYLINEFLSPLTNKRTDKYGGSPENRYRFLREIIDSVNEVWDGPIFVRISANDYHPDGLTVQDYVQYTKWMKEQGIDLIDCSSGAVVPAHIDVYPGYQVQYAKHIKEHTKIATGAVGLITTGSQAEQILNNNEADLIFIGRELLRNPYFPRIAANELGFELQEPYQYKRAPGKIHTNK</sequence>
<proteinExistence type="inferred from homology"/>
<evidence type="ECO:0000255" key="1">
    <source>
        <dbReference type="HAMAP-Rule" id="MF_01614"/>
    </source>
</evidence>
<feature type="chain" id="PRO_1000185861" description="NADPH dehydrogenase">
    <location>
        <begin position="1"/>
        <end position="345"/>
    </location>
</feature>
<feature type="binding site" evidence="1">
    <location>
        <begin position="23"/>
        <end position="26"/>
    </location>
    <ligand>
        <name>FMN</name>
        <dbReference type="ChEBI" id="CHEBI:58210"/>
    </ligand>
</feature>
<feature type="binding site" evidence="1">
    <location>
        <position position="28"/>
    </location>
    <ligand>
        <name>substrate</name>
    </ligand>
</feature>
<feature type="binding site" evidence="1">
    <location>
        <position position="60"/>
    </location>
    <ligand>
        <name>FMN</name>
        <dbReference type="ChEBI" id="CHEBI:58210"/>
    </ligand>
</feature>
<feature type="binding site" evidence="1">
    <location>
        <position position="102"/>
    </location>
    <ligand>
        <name>FMN</name>
        <dbReference type="ChEBI" id="CHEBI:58210"/>
    </ligand>
</feature>
<feature type="binding site" evidence="1">
    <location>
        <begin position="164"/>
        <end position="167"/>
    </location>
    <ligand>
        <name>substrate</name>
    </ligand>
</feature>
<feature type="binding site" evidence="1">
    <location>
        <position position="215"/>
    </location>
    <ligand>
        <name>FMN</name>
        <dbReference type="ChEBI" id="CHEBI:58210"/>
    </ligand>
</feature>
<feature type="binding site" evidence="1">
    <location>
        <begin position="307"/>
        <end position="308"/>
    </location>
    <ligand>
        <name>FMN</name>
        <dbReference type="ChEBI" id="CHEBI:58210"/>
    </ligand>
</feature>
<keyword id="KW-0216">Detoxification</keyword>
<keyword id="KW-0285">Flavoprotein</keyword>
<keyword id="KW-0288">FMN</keyword>
<keyword id="KW-0521">NADP</keyword>
<keyword id="KW-0560">Oxidoreductase</keyword>
<dbReference type="EC" id="1.6.99.1" evidence="1"/>
<dbReference type="EMBL" id="CP001176">
    <property type="protein sequence ID" value="ACK61188.1"/>
    <property type="molecule type" value="Genomic_DNA"/>
</dbReference>
<dbReference type="RefSeq" id="WP_001086176.1">
    <property type="nucleotide sequence ID" value="NC_011725.1"/>
</dbReference>
<dbReference type="SMR" id="B7HJE9"/>
<dbReference type="KEGG" id="bcb:BCB4264_A2028"/>
<dbReference type="HOGENOM" id="CLU_012153_2_1_9"/>
<dbReference type="Proteomes" id="UP000007096">
    <property type="component" value="Chromosome"/>
</dbReference>
<dbReference type="GO" id="GO:0010181">
    <property type="term" value="F:FMN binding"/>
    <property type="evidence" value="ECO:0007669"/>
    <property type="project" value="UniProtKB-UniRule"/>
</dbReference>
<dbReference type="GO" id="GO:0050661">
    <property type="term" value="F:NADP binding"/>
    <property type="evidence" value="ECO:0007669"/>
    <property type="project" value="UniProtKB-UniRule"/>
</dbReference>
<dbReference type="GO" id="GO:0003959">
    <property type="term" value="F:NADPH dehydrogenase activity"/>
    <property type="evidence" value="ECO:0007669"/>
    <property type="project" value="UniProtKB-UniRule"/>
</dbReference>
<dbReference type="GO" id="GO:0009636">
    <property type="term" value="P:response to toxic substance"/>
    <property type="evidence" value="ECO:0007669"/>
    <property type="project" value="UniProtKB-KW"/>
</dbReference>
<dbReference type="CDD" id="cd02932">
    <property type="entry name" value="OYE_YqiM_FMN"/>
    <property type="match status" value="1"/>
</dbReference>
<dbReference type="Gene3D" id="3.20.20.70">
    <property type="entry name" value="Aldolase class I"/>
    <property type="match status" value="1"/>
</dbReference>
<dbReference type="HAMAP" id="MF_01614">
    <property type="entry name" value="NamA"/>
    <property type="match status" value="1"/>
</dbReference>
<dbReference type="InterPro" id="IPR013785">
    <property type="entry name" value="Aldolase_TIM"/>
</dbReference>
<dbReference type="InterPro" id="IPR023663">
    <property type="entry name" value="NADPH_DH_bac"/>
</dbReference>
<dbReference type="InterPro" id="IPR001155">
    <property type="entry name" value="OxRdtase_FMN_N"/>
</dbReference>
<dbReference type="InterPro" id="IPR044152">
    <property type="entry name" value="YqjM-like"/>
</dbReference>
<dbReference type="NCBIfam" id="NF010047">
    <property type="entry name" value="PRK13523.1"/>
    <property type="match status" value="1"/>
</dbReference>
<dbReference type="PANTHER" id="PTHR43303">
    <property type="entry name" value="NADPH DEHYDROGENASE C23G7.10C-RELATED"/>
    <property type="match status" value="1"/>
</dbReference>
<dbReference type="PANTHER" id="PTHR43303:SF4">
    <property type="entry name" value="NADPH DEHYDROGENASE C23G7.10C-RELATED"/>
    <property type="match status" value="1"/>
</dbReference>
<dbReference type="Pfam" id="PF00724">
    <property type="entry name" value="Oxidored_FMN"/>
    <property type="match status" value="1"/>
</dbReference>
<dbReference type="SUPFAM" id="SSF51395">
    <property type="entry name" value="FMN-linked oxidoreductases"/>
    <property type="match status" value="1"/>
</dbReference>
<gene>
    <name evidence="1" type="primary">namA</name>
    <name type="ordered locus">BCB4264_A2028</name>
</gene>
<name>NAMA_BACC4</name>
<organism>
    <name type="scientific">Bacillus cereus (strain B4264)</name>
    <dbReference type="NCBI Taxonomy" id="405532"/>
    <lineage>
        <taxon>Bacteria</taxon>
        <taxon>Bacillati</taxon>
        <taxon>Bacillota</taxon>
        <taxon>Bacilli</taxon>
        <taxon>Bacillales</taxon>
        <taxon>Bacillaceae</taxon>
        <taxon>Bacillus</taxon>
        <taxon>Bacillus cereus group</taxon>
    </lineage>
</organism>
<accession>B7HJE9</accession>
<comment type="function">
    <text evidence="1">Catalyzes the reduction of the double bond of an array of alpha,beta-unsaturated aldehydes and ketones. It also reduces the nitro group of nitroester and nitroaromatic compounds. It could have a role in detoxification processes.</text>
</comment>
<comment type="catalytic activity">
    <reaction evidence="1">
        <text>A + NADPH + H(+) = AH2 + NADP(+)</text>
        <dbReference type="Rhea" id="RHEA:13149"/>
        <dbReference type="ChEBI" id="CHEBI:13193"/>
        <dbReference type="ChEBI" id="CHEBI:15378"/>
        <dbReference type="ChEBI" id="CHEBI:17499"/>
        <dbReference type="ChEBI" id="CHEBI:57783"/>
        <dbReference type="ChEBI" id="CHEBI:58349"/>
        <dbReference type="EC" id="1.6.99.1"/>
    </reaction>
</comment>
<comment type="cofactor">
    <cofactor evidence="1">
        <name>FMN</name>
        <dbReference type="ChEBI" id="CHEBI:58210"/>
    </cofactor>
</comment>
<comment type="subunit">
    <text evidence="1">Homotetramer.</text>
</comment>
<comment type="similarity">
    <text evidence="1">Belongs to the NADH:flavin oxidoreductase/NADH oxidase family. NamA subfamily.</text>
</comment>
<protein>
    <recommendedName>
        <fullName evidence="1">NADPH dehydrogenase</fullName>
        <ecNumber evidence="1">1.6.99.1</ecNumber>
    </recommendedName>
</protein>